<comment type="similarity">
    <text evidence="1">Belongs to the UPF0367 family.</text>
</comment>
<protein>
    <recommendedName>
        <fullName evidence="1">UPF0367 protein Npun_R4552</fullName>
    </recommendedName>
</protein>
<gene>
    <name type="ordered locus">Npun_R4552</name>
</gene>
<dbReference type="EMBL" id="CP001037">
    <property type="protein sequence ID" value="ACC82913.1"/>
    <property type="molecule type" value="Genomic_DNA"/>
</dbReference>
<dbReference type="RefSeq" id="WP_012410874.1">
    <property type="nucleotide sequence ID" value="NC_010628.1"/>
</dbReference>
<dbReference type="STRING" id="63737.Npun_R4552"/>
<dbReference type="EnsemblBacteria" id="ACC82913">
    <property type="protein sequence ID" value="ACC82913"/>
    <property type="gene ID" value="Npun_R4552"/>
</dbReference>
<dbReference type="KEGG" id="npu:Npun_R4552"/>
<dbReference type="eggNOG" id="ENOG5032YB3">
    <property type="taxonomic scope" value="Bacteria"/>
</dbReference>
<dbReference type="HOGENOM" id="CLU_180777_0_0_3"/>
<dbReference type="OrthoDB" id="516864at2"/>
<dbReference type="PhylomeDB" id="B2IVV0"/>
<dbReference type="Proteomes" id="UP000001191">
    <property type="component" value="Chromosome"/>
</dbReference>
<dbReference type="HAMAP" id="MF_01360">
    <property type="entry name" value="UPF0367"/>
    <property type="match status" value="1"/>
</dbReference>
<dbReference type="InterPro" id="IPR020885">
    <property type="entry name" value="UPF0367"/>
</dbReference>
<dbReference type="NCBIfam" id="NF010236">
    <property type="entry name" value="PRK13683.1"/>
    <property type="match status" value="1"/>
</dbReference>
<reference key="1">
    <citation type="journal article" date="2013" name="Plant Physiol.">
        <title>A Nostoc punctiforme Sugar Transporter Necessary to Establish a Cyanobacterium-Plant Symbiosis.</title>
        <authorList>
            <person name="Ekman M."/>
            <person name="Picossi S."/>
            <person name="Campbell E.L."/>
            <person name="Meeks J.C."/>
            <person name="Flores E."/>
        </authorList>
    </citation>
    <scope>NUCLEOTIDE SEQUENCE [LARGE SCALE GENOMIC DNA]</scope>
    <source>
        <strain>ATCC 29133 / PCC 73102</strain>
    </source>
</reference>
<organism>
    <name type="scientific">Nostoc punctiforme (strain ATCC 29133 / PCC 73102)</name>
    <dbReference type="NCBI Taxonomy" id="63737"/>
    <lineage>
        <taxon>Bacteria</taxon>
        <taxon>Bacillati</taxon>
        <taxon>Cyanobacteriota</taxon>
        <taxon>Cyanophyceae</taxon>
        <taxon>Nostocales</taxon>
        <taxon>Nostocaceae</taxon>
        <taxon>Nostoc</taxon>
    </lineage>
</organism>
<evidence type="ECO:0000255" key="1">
    <source>
        <dbReference type="HAMAP-Rule" id="MF_01360"/>
    </source>
</evidence>
<keyword id="KW-1185">Reference proteome</keyword>
<feature type="chain" id="PRO_1000143695" description="UPF0367 protein Npun_R4552">
    <location>
        <begin position="1"/>
        <end position="90"/>
    </location>
</feature>
<accession>B2IVV0</accession>
<sequence length="90" mass="9576">MFTIDLSIRNTAFPISVQRKSAEDAEAVYQLILAAIRSGNPDIVELKCEGKTEKKIAVRASEISGVQIVQKDGTTPGGGRPPGFFAVAAE</sequence>
<name>Y4552_NOSP7</name>
<proteinExistence type="inferred from homology"/>